<proteinExistence type="evidence at transcript level"/>
<comment type="function">
    <text evidence="1 3">Catalyzes the first and rate-limiting reaction of the four reactions that constitute the long-chain fatty acids elongation cycle. This endoplasmic reticulum-bound enzymatic process allows the addition of 2 carbons to the chain of long- and very long-chain fatty acids (VLCFAs) per cycle. Condensing enzyme that acts specifically toward polyunsaturated acyl-CoA with the higher activity toward C18:3(n-6) acyl-CoA. May participate in the production of monounsaturated and of polyunsaturated VLCFAs of different chain lengths that are involved in multiple biological processes as precursors of membrane lipids and lipid mediators (By similarity). In conditions where the essential linoleic and alpha linoleic fatty acids are lacking it is also involved in the synthesis of Mead acid from oleic acid (By similarity).</text>
</comment>
<comment type="catalytic activity">
    <reaction evidence="3">
        <text>a very-long-chain acyl-CoA + malonyl-CoA + H(+) = a very-long-chain 3-oxoacyl-CoA + CO2 + CoA</text>
        <dbReference type="Rhea" id="RHEA:32727"/>
        <dbReference type="ChEBI" id="CHEBI:15378"/>
        <dbReference type="ChEBI" id="CHEBI:16526"/>
        <dbReference type="ChEBI" id="CHEBI:57287"/>
        <dbReference type="ChEBI" id="CHEBI:57384"/>
        <dbReference type="ChEBI" id="CHEBI:90725"/>
        <dbReference type="ChEBI" id="CHEBI:90736"/>
        <dbReference type="EC" id="2.3.1.199"/>
    </reaction>
    <physiologicalReaction direction="left-to-right" evidence="2">
        <dbReference type="Rhea" id="RHEA:32728"/>
    </physiologicalReaction>
</comment>
<comment type="catalytic activity">
    <reaction evidence="2">
        <text>(6Z,9Z,12Z)-octadecatrienoyl-CoA + malonyl-CoA + H(+) = (8Z,11Z,14Z)-3-oxoeicosatrienoyl-CoA + CO2 + CoA</text>
        <dbReference type="Rhea" id="RHEA:35379"/>
        <dbReference type="ChEBI" id="CHEBI:15378"/>
        <dbReference type="ChEBI" id="CHEBI:16526"/>
        <dbReference type="ChEBI" id="CHEBI:57287"/>
        <dbReference type="ChEBI" id="CHEBI:57363"/>
        <dbReference type="ChEBI" id="CHEBI:57384"/>
        <dbReference type="ChEBI" id="CHEBI:71481"/>
    </reaction>
    <physiologicalReaction direction="left-to-right" evidence="2">
        <dbReference type="Rhea" id="RHEA:35380"/>
    </physiologicalReaction>
</comment>
<comment type="catalytic activity">
    <reaction evidence="2">
        <text>(9Z,12Z,15Z)-octadecatrienoyl-CoA + malonyl-CoA + H(+) = (11Z,14Z,17Z)-3-oxoeicosatrienoyl-CoA + CO2 + CoA</text>
        <dbReference type="Rhea" id="RHEA:36523"/>
        <dbReference type="ChEBI" id="CHEBI:15378"/>
        <dbReference type="ChEBI" id="CHEBI:16526"/>
        <dbReference type="ChEBI" id="CHEBI:57287"/>
        <dbReference type="ChEBI" id="CHEBI:57384"/>
        <dbReference type="ChEBI" id="CHEBI:74034"/>
        <dbReference type="ChEBI" id="CHEBI:74054"/>
    </reaction>
    <physiologicalReaction direction="left-to-right" evidence="2">
        <dbReference type="Rhea" id="RHEA:36524"/>
    </physiologicalReaction>
</comment>
<comment type="catalytic activity">
    <reaction evidence="2">
        <text>(9Z)-hexadecenoyl-CoA + malonyl-CoA + H(+) = 3-oxo-(11Z)-octadecenoyl-CoA + CO2 + CoA</text>
        <dbReference type="Rhea" id="RHEA:39675"/>
        <dbReference type="ChEBI" id="CHEBI:15378"/>
        <dbReference type="ChEBI" id="CHEBI:16526"/>
        <dbReference type="ChEBI" id="CHEBI:57287"/>
        <dbReference type="ChEBI" id="CHEBI:57384"/>
        <dbReference type="ChEBI" id="CHEBI:61540"/>
        <dbReference type="ChEBI" id="CHEBI:76555"/>
    </reaction>
    <physiologicalReaction direction="left-to-right" evidence="2">
        <dbReference type="Rhea" id="RHEA:39676"/>
    </physiologicalReaction>
</comment>
<comment type="catalytic activity">
    <reaction evidence="2">
        <text>(9Z)-octadecenoyl-CoA + malonyl-CoA + H(+) = 3-oxo-(11Z)-eicosenoyl-CoA + CO2 + CoA</text>
        <dbReference type="Rhea" id="RHEA:36511"/>
        <dbReference type="ChEBI" id="CHEBI:15378"/>
        <dbReference type="ChEBI" id="CHEBI:16526"/>
        <dbReference type="ChEBI" id="CHEBI:57287"/>
        <dbReference type="ChEBI" id="CHEBI:57384"/>
        <dbReference type="ChEBI" id="CHEBI:57387"/>
        <dbReference type="ChEBI" id="CHEBI:74011"/>
    </reaction>
    <physiologicalReaction direction="left-to-right" evidence="2">
        <dbReference type="Rhea" id="RHEA:36512"/>
    </physiologicalReaction>
</comment>
<comment type="catalytic activity">
    <reaction evidence="2">
        <text>(11Z)-octadecenoyl-CoA + malonyl-CoA + H(+) = 3-oxo-(13Z)-eicosenoyl-CoA + CO2 + CoA</text>
        <dbReference type="Rhea" id="RHEA:39679"/>
        <dbReference type="ChEBI" id="CHEBI:15378"/>
        <dbReference type="ChEBI" id="CHEBI:16526"/>
        <dbReference type="ChEBI" id="CHEBI:57287"/>
        <dbReference type="ChEBI" id="CHEBI:57384"/>
        <dbReference type="ChEBI" id="CHEBI:75121"/>
        <dbReference type="ChEBI" id="CHEBI:76559"/>
    </reaction>
    <physiologicalReaction direction="left-to-right" evidence="2">
        <dbReference type="Rhea" id="RHEA:39680"/>
    </physiologicalReaction>
</comment>
<comment type="catalytic activity">
    <reaction evidence="2">
        <text>(9Z,12Z)-octadecadienoyl-CoA + malonyl-CoA + H(+) = (11Z,14Z)-3-oxoicosa-11,14-dienoyl-CoA + CO2 + CoA</text>
        <dbReference type="Rhea" id="RHEA:36503"/>
        <dbReference type="ChEBI" id="CHEBI:15378"/>
        <dbReference type="ChEBI" id="CHEBI:16526"/>
        <dbReference type="ChEBI" id="CHEBI:57287"/>
        <dbReference type="ChEBI" id="CHEBI:57383"/>
        <dbReference type="ChEBI" id="CHEBI:57384"/>
        <dbReference type="ChEBI" id="CHEBI:74012"/>
    </reaction>
    <physiologicalReaction direction="left-to-right" evidence="2">
        <dbReference type="Rhea" id="RHEA:36504"/>
    </physiologicalReaction>
</comment>
<comment type="catalytic activity">
    <reaction evidence="2">
        <text>(6Z,9Z,12Z,15Z)-octadecatetraenoyl-CoA + malonyl-CoA + H(+) = (8Z,11Z,14Z,17Z)-3-oxoicosatetraenoyl-CoA + CO2 + CoA</text>
        <dbReference type="Rhea" id="RHEA:35391"/>
        <dbReference type="ChEBI" id="CHEBI:15378"/>
        <dbReference type="ChEBI" id="CHEBI:16526"/>
        <dbReference type="ChEBI" id="CHEBI:57287"/>
        <dbReference type="ChEBI" id="CHEBI:57384"/>
        <dbReference type="ChEBI" id="CHEBI:71489"/>
        <dbReference type="ChEBI" id="CHEBI:71491"/>
    </reaction>
    <physiologicalReaction direction="left-to-right" evidence="2">
        <dbReference type="Rhea" id="RHEA:35392"/>
    </physiologicalReaction>
</comment>
<comment type="catalytic activity">
    <reaction evidence="2">
        <text>(5Z,8Z,11Z,14Z)-eicosatetraenoyl-CoA + malonyl-CoA + H(+) = (7Z,10Z,13Z,16Z)-3-oxodocosatetraenoyl-CoA + CO2 + CoA</text>
        <dbReference type="Rhea" id="RHEA:36475"/>
        <dbReference type="ChEBI" id="CHEBI:15378"/>
        <dbReference type="ChEBI" id="CHEBI:16526"/>
        <dbReference type="ChEBI" id="CHEBI:57287"/>
        <dbReference type="ChEBI" id="CHEBI:57368"/>
        <dbReference type="ChEBI" id="CHEBI:57384"/>
        <dbReference type="ChEBI" id="CHEBI:73852"/>
    </reaction>
    <physiologicalReaction direction="left-to-right" evidence="2">
        <dbReference type="Rhea" id="RHEA:36476"/>
    </physiologicalReaction>
</comment>
<comment type="catalytic activity">
    <reaction evidence="2">
        <text>(5Z,8Z,11Z,14Z,17Z)-eicosapentaenoyl-CoA + malonyl-CoA + H(+) = 3-oxo-(7Z,10Z,13Z,16Z,19Z)-docosapentaenoyl-CoA + CO2 + CoA</text>
        <dbReference type="Rhea" id="RHEA:36483"/>
        <dbReference type="ChEBI" id="CHEBI:15378"/>
        <dbReference type="ChEBI" id="CHEBI:16526"/>
        <dbReference type="ChEBI" id="CHEBI:57287"/>
        <dbReference type="ChEBI" id="CHEBI:57384"/>
        <dbReference type="ChEBI" id="CHEBI:73862"/>
        <dbReference type="ChEBI" id="CHEBI:73863"/>
    </reaction>
    <physiologicalReaction direction="left-to-right" evidence="2">
        <dbReference type="Rhea" id="RHEA:36484"/>
    </physiologicalReaction>
</comment>
<comment type="pathway">
    <text evidence="3">Lipid metabolism; polyunsaturated fatty acid biosynthesis.</text>
</comment>
<comment type="subunit">
    <text evidence="2">Interacts with TECR.</text>
</comment>
<comment type="subcellular location">
    <subcellularLocation>
        <location evidence="3">Endoplasmic reticulum membrane</location>
        <topology evidence="3">Multi-pass membrane protein</topology>
    </subcellularLocation>
    <subcellularLocation>
        <location evidence="3">Cell projection</location>
        <location evidence="3">Dendrite</location>
    </subcellularLocation>
    <text evidence="3">In Purkinje cells, the protein localizes to the soma and proximal portion of the dendritic tree.</text>
</comment>
<comment type="similarity">
    <text evidence="3">Belongs to the ELO family. ELOVL5 subfamily.</text>
</comment>
<accession>Q2KJD9</accession>
<name>ELOV5_BOVIN</name>
<evidence type="ECO:0000250" key="1">
    <source>
        <dbReference type="UniProtKB" id="Q8BHI7"/>
    </source>
</evidence>
<evidence type="ECO:0000250" key="2">
    <source>
        <dbReference type="UniProtKB" id="Q9NYP7"/>
    </source>
</evidence>
<evidence type="ECO:0000255" key="3">
    <source>
        <dbReference type="HAMAP-Rule" id="MF_03205"/>
    </source>
</evidence>
<gene>
    <name evidence="3" type="primary">ELOVL5</name>
</gene>
<sequence length="299" mass="35377">MEHFDASLSTYFRAWLGPRDTRVEGWFLLDNYVPTLVCSILYLLIVWLGPKYMKTRQPFSCRGILVVYNLGLTLLSLYMFCELVTGVWEGQYNFFCQGTRSGGEADMKIIRVLWWYYFSKLIEFMDTFFFILRKNNHQITVLHVYHHASMLNIWWFVMNWVPCGHSYFGATLNSFIHVLMYSYYGLSSIPSMRPYLWWKKYITQGQLLQFVLTIIQTSCGVIWPCTFPLGWLYFQIGYMISLITLFTNFYIQTYNKKGVSRRREHQKDHQNGSVAAVNGHISSFSSLENNVKPRKQRKD</sequence>
<protein>
    <recommendedName>
        <fullName evidence="3">Very long chain fatty acid elongase 5</fullName>
        <ecNumber evidence="2 3">2.3.1.199</ecNumber>
    </recommendedName>
    <alternativeName>
        <fullName evidence="3">3-keto acyl-CoA synthase ELOVL5</fullName>
    </alternativeName>
    <alternativeName>
        <fullName evidence="3">ELOVL fatty acid elongase 5</fullName>
        <shortName evidence="3">ELOVL FA elongase 5</shortName>
    </alternativeName>
    <alternativeName>
        <fullName evidence="3">Elongation of very long chain fatty acids protein 5</fullName>
    </alternativeName>
    <alternativeName>
        <fullName evidence="3">Very long chain 3-ketoacyl-CoA synthase 5</fullName>
    </alternativeName>
    <alternativeName>
        <fullName evidence="3">Very long chain 3-oxoacyl-CoA synthase 5</fullName>
    </alternativeName>
</protein>
<keyword id="KW-0007">Acetylation</keyword>
<keyword id="KW-0966">Cell projection</keyword>
<keyword id="KW-0256">Endoplasmic reticulum</keyword>
<keyword id="KW-0275">Fatty acid biosynthesis</keyword>
<keyword id="KW-0276">Fatty acid metabolism</keyword>
<keyword id="KW-0444">Lipid biosynthesis</keyword>
<keyword id="KW-0443">Lipid metabolism</keyword>
<keyword id="KW-0472">Membrane</keyword>
<keyword id="KW-0597">Phosphoprotein</keyword>
<keyword id="KW-1185">Reference proteome</keyword>
<keyword id="KW-0808">Transferase</keyword>
<keyword id="KW-0812">Transmembrane</keyword>
<keyword id="KW-1133">Transmembrane helix</keyword>
<feature type="chain" id="PRO_0000282837" description="Very long chain fatty acid elongase 5">
    <location>
        <begin position="1"/>
        <end position="299"/>
    </location>
</feature>
<feature type="transmembrane region" description="Helical" evidence="3">
    <location>
        <begin position="26"/>
        <end position="46"/>
    </location>
</feature>
<feature type="transmembrane region" description="Helical" evidence="3">
    <location>
        <begin position="64"/>
        <end position="84"/>
    </location>
</feature>
<feature type="transmembrane region" description="Helical" evidence="3">
    <location>
        <begin position="112"/>
        <end position="132"/>
    </location>
</feature>
<feature type="transmembrane region" description="Helical" evidence="3">
    <location>
        <begin position="139"/>
        <end position="158"/>
    </location>
</feature>
<feature type="transmembrane region" description="Helical" evidence="3">
    <location>
        <begin position="168"/>
        <end position="187"/>
    </location>
</feature>
<feature type="transmembrane region" description="Helical" evidence="3">
    <location>
        <begin position="205"/>
        <end position="225"/>
    </location>
</feature>
<feature type="transmembrane region" description="Helical" evidence="3">
    <location>
        <begin position="226"/>
        <end position="246"/>
    </location>
</feature>
<feature type="modified residue" description="N-acetylmethionine" evidence="2">
    <location>
        <position position="1"/>
    </location>
</feature>
<feature type="modified residue" description="Phosphoserine" evidence="2">
    <location>
        <position position="285"/>
    </location>
</feature>
<dbReference type="EC" id="2.3.1.199" evidence="2 3"/>
<dbReference type="EMBL" id="BC105391">
    <property type="protein sequence ID" value="AAI05392.1"/>
    <property type="molecule type" value="mRNA"/>
</dbReference>
<dbReference type="RefSeq" id="NP_001040062.1">
    <property type="nucleotide sequence ID" value="NM_001046597.1"/>
</dbReference>
<dbReference type="SMR" id="Q2KJD9"/>
<dbReference type="FunCoup" id="Q2KJD9">
    <property type="interactions" value="722"/>
</dbReference>
<dbReference type="STRING" id="9913.ENSBTAP00000004358"/>
<dbReference type="PaxDb" id="9913-ENSBTAP00000004358"/>
<dbReference type="Ensembl" id="ENSBTAT00000004358.4">
    <property type="protein sequence ID" value="ENSBTAP00000004358.3"/>
    <property type="gene ID" value="ENSBTAG00000003359.6"/>
</dbReference>
<dbReference type="GeneID" id="617293"/>
<dbReference type="KEGG" id="bta:617293"/>
<dbReference type="CTD" id="60481"/>
<dbReference type="VEuPathDB" id="HostDB:ENSBTAG00000003359"/>
<dbReference type="VGNC" id="VGNC:28451">
    <property type="gene designation" value="ELOVL5"/>
</dbReference>
<dbReference type="eggNOG" id="KOG3071">
    <property type="taxonomic scope" value="Eukaryota"/>
</dbReference>
<dbReference type="GeneTree" id="ENSGT01050000244838"/>
<dbReference type="HOGENOM" id="CLU_048483_0_1_1"/>
<dbReference type="InParanoid" id="Q2KJD9"/>
<dbReference type="OMA" id="CRFPMGW"/>
<dbReference type="OrthoDB" id="434092at2759"/>
<dbReference type="TreeFam" id="TF323454"/>
<dbReference type="Reactome" id="R-BTA-2046105">
    <property type="pathway name" value="Linoleic acid (LA) metabolism"/>
</dbReference>
<dbReference type="Reactome" id="R-BTA-2046106">
    <property type="pathway name" value="alpha-linolenic acid (ALA) metabolism"/>
</dbReference>
<dbReference type="Reactome" id="R-BTA-75876">
    <property type="pathway name" value="Synthesis of very long-chain fatty acyl-CoAs"/>
</dbReference>
<dbReference type="UniPathway" id="UPA00658"/>
<dbReference type="Proteomes" id="UP000009136">
    <property type="component" value="Chromosome 23"/>
</dbReference>
<dbReference type="Bgee" id="ENSBTAG00000003359">
    <property type="expression patterns" value="Expressed in omental fat pad and 101 other cell types or tissues"/>
</dbReference>
<dbReference type="GO" id="GO:0030425">
    <property type="term" value="C:dendrite"/>
    <property type="evidence" value="ECO:0007669"/>
    <property type="project" value="UniProtKB-SubCell"/>
</dbReference>
<dbReference type="GO" id="GO:0097447">
    <property type="term" value="C:dendritic tree"/>
    <property type="evidence" value="ECO:0000250"/>
    <property type="project" value="UniProtKB"/>
</dbReference>
<dbReference type="GO" id="GO:0005789">
    <property type="term" value="C:endoplasmic reticulum membrane"/>
    <property type="evidence" value="ECO:0000318"/>
    <property type="project" value="GO_Central"/>
</dbReference>
<dbReference type="GO" id="GO:0043025">
    <property type="term" value="C:neuronal cell body"/>
    <property type="evidence" value="ECO:0000250"/>
    <property type="project" value="UniProtKB"/>
</dbReference>
<dbReference type="GO" id="GO:0009922">
    <property type="term" value="F:fatty acid elongase activity"/>
    <property type="evidence" value="ECO:0000250"/>
    <property type="project" value="UniProtKB"/>
</dbReference>
<dbReference type="GO" id="GO:0034625">
    <property type="term" value="P:fatty acid elongation, monounsaturated fatty acid"/>
    <property type="evidence" value="ECO:0000250"/>
    <property type="project" value="UniProtKB"/>
</dbReference>
<dbReference type="GO" id="GO:0034626">
    <property type="term" value="P:fatty acid elongation, polyunsaturated fatty acid"/>
    <property type="evidence" value="ECO:0000250"/>
    <property type="project" value="UniProtKB"/>
</dbReference>
<dbReference type="GO" id="GO:0019367">
    <property type="term" value="P:fatty acid elongation, saturated fatty acid"/>
    <property type="evidence" value="ECO:0000318"/>
    <property type="project" value="GO_Central"/>
</dbReference>
<dbReference type="GO" id="GO:0042759">
    <property type="term" value="P:long-chain fatty acid biosynthetic process"/>
    <property type="evidence" value="ECO:0000250"/>
    <property type="project" value="AgBase"/>
</dbReference>
<dbReference type="GO" id="GO:0035338">
    <property type="term" value="P:long-chain fatty-acyl-CoA biosynthetic process"/>
    <property type="evidence" value="ECO:0007669"/>
    <property type="project" value="UniProtKB-UniRule"/>
</dbReference>
<dbReference type="GO" id="GO:0030148">
    <property type="term" value="P:sphingolipid biosynthetic process"/>
    <property type="evidence" value="ECO:0000318"/>
    <property type="project" value="GO_Central"/>
</dbReference>
<dbReference type="GO" id="GO:0006636">
    <property type="term" value="P:unsaturated fatty acid biosynthetic process"/>
    <property type="evidence" value="ECO:0007669"/>
    <property type="project" value="UniProtKB-UniRule"/>
</dbReference>
<dbReference type="GO" id="GO:0042761">
    <property type="term" value="P:very long-chain fatty acid biosynthetic process"/>
    <property type="evidence" value="ECO:0000250"/>
    <property type="project" value="UniProtKB"/>
</dbReference>
<dbReference type="HAMAP" id="MF_03205">
    <property type="entry name" value="VLCF_elongase_5"/>
    <property type="match status" value="1"/>
</dbReference>
<dbReference type="InterPro" id="IPR002076">
    <property type="entry name" value="ELO_fam"/>
</dbReference>
<dbReference type="InterPro" id="IPR033677">
    <property type="entry name" value="ELOVL5"/>
</dbReference>
<dbReference type="PANTHER" id="PTHR11157:SF18">
    <property type="entry name" value="ELONGATION OF VERY LONG CHAIN FATTY ACIDS PROTEIN 5"/>
    <property type="match status" value="1"/>
</dbReference>
<dbReference type="PANTHER" id="PTHR11157">
    <property type="entry name" value="FATTY ACID ACYL TRANSFERASE-RELATED"/>
    <property type="match status" value="1"/>
</dbReference>
<dbReference type="Pfam" id="PF01151">
    <property type="entry name" value="ELO"/>
    <property type="match status" value="1"/>
</dbReference>
<reference key="1">
    <citation type="submission" date="2005-09" db="EMBL/GenBank/DDBJ databases">
        <authorList>
            <consortium name="NIH - Mammalian Gene Collection (MGC) project"/>
        </authorList>
    </citation>
    <scope>NUCLEOTIDE SEQUENCE [LARGE SCALE MRNA]</scope>
    <source>
        <strain>Hereford</strain>
        <tissue>Fetal liver</tissue>
    </source>
</reference>
<organism>
    <name type="scientific">Bos taurus</name>
    <name type="common">Bovine</name>
    <dbReference type="NCBI Taxonomy" id="9913"/>
    <lineage>
        <taxon>Eukaryota</taxon>
        <taxon>Metazoa</taxon>
        <taxon>Chordata</taxon>
        <taxon>Craniata</taxon>
        <taxon>Vertebrata</taxon>
        <taxon>Euteleostomi</taxon>
        <taxon>Mammalia</taxon>
        <taxon>Eutheria</taxon>
        <taxon>Laurasiatheria</taxon>
        <taxon>Artiodactyla</taxon>
        <taxon>Ruminantia</taxon>
        <taxon>Pecora</taxon>
        <taxon>Bovidae</taxon>
        <taxon>Bovinae</taxon>
        <taxon>Bos</taxon>
    </lineage>
</organism>